<keyword id="KW-0903">Direct protein sequencing</keyword>
<keyword id="KW-0967">Endosome</keyword>
<keyword id="KW-0342">GTP-binding</keyword>
<keyword id="KW-0378">Hydrolase</keyword>
<keyword id="KW-0449">Lipoprotein</keyword>
<keyword id="KW-0472">Membrane</keyword>
<keyword id="KW-0488">Methylation</keyword>
<keyword id="KW-0547">Nucleotide-binding</keyword>
<keyword id="KW-0564">Palmitate</keyword>
<keyword id="KW-0636">Prenylation</keyword>
<keyword id="KW-1185">Reference proteome</keyword>
<reference key="1">
    <citation type="journal article" date="2005" name="Science">
        <title>The transcriptional landscape of the mammalian genome.</title>
        <authorList>
            <person name="Carninci P."/>
            <person name="Kasukawa T."/>
            <person name="Katayama S."/>
            <person name="Gough J."/>
            <person name="Frith M.C."/>
            <person name="Maeda N."/>
            <person name="Oyama R."/>
            <person name="Ravasi T."/>
            <person name="Lenhard B."/>
            <person name="Wells C."/>
            <person name="Kodzius R."/>
            <person name="Shimokawa K."/>
            <person name="Bajic V.B."/>
            <person name="Brenner S.E."/>
            <person name="Batalov S."/>
            <person name="Forrest A.R."/>
            <person name="Zavolan M."/>
            <person name="Davis M.J."/>
            <person name="Wilming L.G."/>
            <person name="Aidinis V."/>
            <person name="Allen J.E."/>
            <person name="Ambesi-Impiombato A."/>
            <person name="Apweiler R."/>
            <person name="Aturaliya R.N."/>
            <person name="Bailey T.L."/>
            <person name="Bansal M."/>
            <person name="Baxter L."/>
            <person name="Beisel K.W."/>
            <person name="Bersano T."/>
            <person name="Bono H."/>
            <person name="Chalk A.M."/>
            <person name="Chiu K.P."/>
            <person name="Choudhary V."/>
            <person name="Christoffels A."/>
            <person name="Clutterbuck D.R."/>
            <person name="Crowe M.L."/>
            <person name="Dalla E."/>
            <person name="Dalrymple B.P."/>
            <person name="de Bono B."/>
            <person name="Della Gatta G."/>
            <person name="di Bernardo D."/>
            <person name="Down T."/>
            <person name="Engstrom P."/>
            <person name="Fagiolini M."/>
            <person name="Faulkner G."/>
            <person name="Fletcher C.F."/>
            <person name="Fukushima T."/>
            <person name="Furuno M."/>
            <person name="Futaki S."/>
            <person name="Gariboldi M."/>
            <person name="Georgii-Hemming P."/>
            <person name="Gingeras T.R."/>
            <person name="Gojobori T."/>
            <person name="Green R.E."/>
            <person name="Gustincich S."/>
            <person name="Harbers M."/>
            <person name="Hayashi Y."/>
            <person name="Hensch T.K."/>
            <person name="Hirokawa N."/>
            <person name="Hill D."/>
            <person name="Huminiecki L."/>
            <person name="Iacono M."/>
            <person name="Ikeo K."/>
            <person name="Iwama A."/>
            <person name="Ishikawa T."/>
            <person name="Jakt M."/>
            <person name="Kanapin A."/>
            <person name="Katoh M."/>
            <person name="Kawasawa Y."/>
            <person name="Kelso J."/>
            <person name="Kitamura H."/>
            <person name="Kitano H."/>
            <person name="Kollias G."/>
            <person name="Krishnan S.P."/>
            <person name="Kruger A."/>
            <person name="Kummerfeld S.K."/>
            <person name="Kurochkin I.V."/>
            <person name="Lareau L.F."/>
            <person name="Lazarevic D."/>
            <person name="Lipovich L."/>
            <person name="Liu J."/>
            <person name="Liuni S."/>
            <person name="McWilliam S."/>
            <person name="Madan Babu M."/>
            <person name="Madera M."/>
            <person name="Marchionni L."/>
            <person name="Matsuda H."/>
            <person name="Matsuzawa S."/>
            <person name="Miki H."/>
            <person name="Mignone F."/>
            <person name="Miyake S."/>
            <person name="Morris K."/>
            <person name="Mottagui-Tabar S."/>
            <person name="Mulder N."/>
            <person name="Nakano N."/>
            <person name="Nakauchi H."/>
            <person name="Ng P."/>
            <person name="Nilsson R."/>
            <person name="Nishiguchi S."/>
            <person name="Nishikawa S."/>
            <person name="Nori F."/>
            <person name="Ohara O."/>
            <person name="Okazaki Y."/>
            <person name="Orlando V."/>
            <person name="Pang K.C."/>
            <person name="Pavan W.J."/>
            <person name="Pavesi G."/>
            <person name="Pesole G."/>
            <person name="Petrovsky N."/>
            <person name="Piazza S."/>
            <person name="Reed J."/>
            <person name="Reid J.F."/>
            <person name="Ring B.Z."/>
            <person name="Ringwald M."/>
            <person name="Rost B."/>
            <person name="Ruan Y."/>
            <person name="Salzberg S.L."/>
            <person name="Sandelin A."/>
            <person name="Schneider C."/>
            <person name="Schoenbach C."/>
            <person name="Sekiguchi K."/>
            <person name="Semple C.A."/>
            <person name="Seno S."/>
            <person name="Sessa L."/>
            <person name="Sheng Y."/>
            <person name="Shibata Y."/>
            <person name="Shimada H."/>
            <person name="Shimada K."/>
            <person name="Silva D."/>
            <person name="Sinclair B."/>
            <person name="Sperling S."/>
            <person name="Stupka E."/>
            <person name="Sugiura K."/>
            <person name="Sultana R."/>
            <person name="Takenaka Y."/>
            <person name="Taki K."/>
            <person name="Tammoja K."/>
            <person name="Tan S.L."/>
            <person name="Tang S."/>
            <person name="Taylor M.S."/>
            <person name="Tegner J."/>
            <person name="Teichmann S.A."/>
            <person name="Ueda H.R."/>
            <person name="van Nimwegen E."/>
            <person name="Verardo R."/>
            <person name="Wei C.L."/>
            <person name="Yagi K."/>
            <person name="Yamanishi H."/>
            <person name="Zabarovsky E."/>
            <person name="Zhu S."/>
            <person name="Zimmer A."/>
            <person name="Hide W."/>
            <person name="Bult C."/>
            <person name="Grimmond S.M."/>
            <person name="Teasdale R.D."/>
            <person name="Liu E.T."/>
            <person name="Brusic V."/>
            <person name="Quackenbush J."/>
            <person name="Wahlestedt C."/>
            <person name="Mattick J.S."/>
            <person name="Hume D.A."/>
            <person name="Kai C."/>
            <person name="Sasaki D."/>
            <person name="Tomaru Y."/>
            <person name="Fukuda S."/>
            <person name="Kanamori-Katayama M."/>
            <person name="Suzuki M."/>
            <person name="Aoki J."/>
            <person name="Arakawa T."/>
            <person name="Iida J."/>
            <person name="Imamura K."/>
            <person name="Itoh M."/>
            <person name="Kato T."/>
            <person name="Kawaji H."/>
            <person name="Kawagashira N."/>
            <person name="Kawashima T."/>
            <person name="Kojima M."/>
            <person name="Kondo S."/>
            <person name="Konno H."/>
            <person name="Nakano K."/>
            <person name="Ninomiya N."/>
            <person name="Nishio T."/>
            <person name="Okada M."/>
            <person name="Plessy C."/>
            <person name="Shibata K."/>
            <person name="Shiraki T."/>
            <person name="Suzuki S."/>
            <person name="Tagami M."/>
            <person name="Waki K."/>
            <person name="Watahiki A."/>
            <person name="Okamura-Oho Y."/>
            <person name="Suzuki H."/>
            <person name="Kawai J."/>
            <person name="Hayashizaki Y."/>
        </authorList>
    </citation>
    <scope>NUCLEOTIDE SEQUENCE [LARGE SCALE MRNA]</scope>
    <source>
        <strain>C57BL/6J</strain>
        <tissue>Embryonic head</tissue>
    </source>
</reference>
<reference key="2">
    <citation type="journal article" date="2004" name="Genome Res.">
        <title>The status, quality, and expansion of the NIH full-length cDNA project: the Mammalian Gene Collection (MGC).</title>
        <authorList>
            <consortium name="The MGC Project Team"/>
        </authorList>
    </citation>
    <scope>NUCLEOTIDE SEQUENCE [LARGE SCALE MRNA]</scope>
    <source>
        <strain>C57BL/6J</strain>
        <strain>FVB/N</strain>
        <tissue>Cerebellum</tissue>
        <tissue>Mammary gland</tissue>
    </source>
</reference>
<reference key="3">
    <citation type="submission" date="2007-04" db="UniProtKB">
        <authorList>
            <person name="Lubec G."/>
            <person name="Kang S.U."/>
        </authorList>
    </citation>
    <scope>PROTEIN SEQUENCE OF 6-16; 43-68 AND 151-162</scope>
    <scope>IDENTIFICATION BY MASS SPECTROMETRY</scope>
    <source>
        <strain>C57BL/6J</strain>
        <tissue>Brain</tissue>
    </source>
</reference>
<reference key="4">
    <citation type="journal article" date="1998" name="Eur. J. Biochem.">
        <title>Identification of a specific effector of the small GTP-binding protein Rap2.</title>
        <authorList>
            <person name="Janoueix-Lerosey I."/>
            <person name="Pasheva E."/>
            <person name="de Tand M.-F."/>
            <person name="Tavitian A."/>
            <person name="de Gunzburg J."/>
        </authorList>
    </citation>
    <scope>INTERACTION WITH RUNDC3A</scope>
    <scope>DOMAIN</scope>
</reference>
<reference key="5">
    <citation type="journal article" date="2009" name="Biochem. Biophys. Res. Commun.">
        <title>Rap2 function requires palmitoylation and recycling endosome localization.</title>
        <authorList>
            <person name="Uechi Y."/>
            <person name="Bayarjargal M."/>
            <person name="Umikawa M."/>
            <person name="Oshiro M."/>
            <person name="Takei K."/>
            <person name="Yamashiro Y."/>
            <person name="Asato T."/>
            <person name="Endo S."/>
            <person name="Misaki R."/>
            <person name="Taguchi T."/>
            <person name="Kariya K."/>
        </authorList>
    </citation>
    <scope>FUNCTION</scope>
    <scope>SUBCELLULAR LOCATION</scope>
    <scope>ISOPRENYLATION AT CYS-180</scope>
    <scope>METHYLATION AT CYS-180</scope>
    <scope>PALMITOYLATION AT CYS-176 AND CYS-177</scope>
    <scope>MUTAGENESIS OF CYS-176; CYS-177 AND CYS-180</scope>
</reference>
<reference key="6">
    <citation type="journal article" date="2010" name="Cell">
        <title>A tissue-specific atlas of mouse protein phosphorylation and expression.</title>
        <authorList>
            <person name="Huttlin E.L."/>
            <person name="Jedrychowski M.P."/>
            <person name="Elias J.E."/>
            <person name="Goswami T."/>
            <person name="Rad R."/>
            <person name="Beausoleil S.A."/>
            <person name="Villen J."/>
            <person name="Haas W."/>
            <person name="Sowa M.E."/>
            <person name="Gygi S.P."/>
        </authorList>
    </citation>
    <scope>IDENTIFICATION BY MASS SPECTROMETRY [LARGE SCALE ANALYSIS]</scope>
    <source>
        <tissue>Brain</tissue>
        <tissue>Brown adipose tissue</tissue>
        <tissue>Kidney</tissue>
        <tissue>Liver</tissue>
        <tissue>Lung</tissue>
        <tissue>Spleen</tissue>
        <tissue>Testis</tissue>
    </source>
</reference>
<protein>
    <recommendedName>
        <fullName>Ras-related protein Rap-2b</fullName>
        <ecNumber evidence="2">3.6.5.2</ecNumber>
    </recommendedName>
</protein>
<organism>
    <name type="scientific">Mus musculus</name>
    <name type="common">Mouse</name>
    <dbReference type="NCBI Taxonomy" id="10090"/>
    <lineage>
        <taxon>Eukaryota</taxon>
        <taxon>Metazoa</taxon>
        <taxon>Chordata</taxon>
        <taxon>Craniata</taxon>
        <taxon>Vertebrata</taxon>
        <taxon>Euteleostomi</taxon>
        <taxon>Mammalia</taxon>
        <taxon>Eutheria</taxon>
        <taxon>Euarchontoglires</taxon>
        <taxon>Glires</taxon>
        <taxon>Rodentia</taxon>
        <taxon>Myomorpha</taxon>
        <taxon>Muroidea</taxon>
        <taxon>Muridae</taxon>
        <taxon>Murinae</taxon>
        <taxon>Mus</taxon>
        <taxon>Mus</taxon>
    </lineage>
</organism>
<comment type="function">
    <text evidence="3">Small GTP-binding protein which cycles between a GDP-bound inactive and a GTP-bound active form. Involved in EGFR and CHRM3 signaling pathways through stimulation of PLCE1. May play a role in cytoskeletal rearrangements and regulate cell spreading through activation of the effector TNIK. May regulate membrane vesiculation in red blood cells.</text>
</comment>
<comment type="catalytic activity">
    <reaction evidence="2">
        <text>GTP + H2O = GDP + phosphate + H(+)</text>
        <dbReference type="Rhea" id="RHEA:19669"/>
        <dbReference type="ChEBI" id="CHEBI:15377"/>
        <dbReference type="ChEBI" id="CHEBI:15378"/>
        <dbReference type="ChEBI" id="CHEBI:37565"/>
        <dbReference type="ChEBI" id="CHEBI:43474"/>
        <dbReference type="ChEBI" id="CHEBI:58189"/>
        <dbReference type="EC" id="3.6.5.2"/>
    </reaction>
</comment>
<comment type="subunit">
    <text evidence="1 4">Interacts with PLCE1. Interacts with SGSM1, SGSM2 and SGSM3 (By similarity). The GTP-bound form of RAP2B interacts with RUNDC3A.</text>
</comment>
<comment type="subcellular location">
    <subcellularLocation>
        <location evidence="3">Recycling endosome membrane</location>
        <topology evidence="3">Lipid-anchor</topology>
        <orientation evidence="3">Cytoplasmic side</orientation>
    </subcellularLocation>
    <text evidence="1">Associated with red blood cells-released vesicles.</text>
</comment>
<comment type="domain">
    <text evidence="4">The effector domain mediates the interaction with RUNDC3A.</text>
</comment>
<comment type="PTM">
    <text evidence="3">Palmitoylated. Unlike RAP2A and RAP2C, palmitoylation of RAP2B is not required for association with recycling endosome membranes and activation of TNIK.</text>
</comment>
<comment type="similarity">
    <text evidence="5">Belongs to the small GTPase superfamily. Ras family.</text>
</comment>
<dbReference type="EC" id="3.6.5.2" evidence="2"/>
<dbReference type="EMBL" id="AK014462">
    <property type="protein sequence ID" value="BAB29368.1"/>
    <property type="molecule type" value="mRNA"/>
</dbReference>
<dbReference type="EMBL" id="BC032168">
    <property type="protein sequence ID" value="AAH32168.1"/>
    <property type="molecule type" value="mRNA"/>
</dbReference>
<dbReference type="EMBL" id="BC046528">
    <property type="protein sequence ID" value="AAH46528.1"/>
    <property type="molecule type" value="mRNA"/>
</dbReference>
<dbReference type="CCDS" id="CCDS17378.1"/>
<dbReference type="RefSeq" id="NP_082988.1">
    <property type="nucleotide sequence ID" value="NM_028712.4"/>
</dbReference>
<dbReference type="SMR" id="P61226"/>
<dbReference type="BioGRID" id="216422">
    <property type="interactions" value="9"/>
</dbReference>
<dbReference type="FunCoup" id="P61226">
    <property type="interactions" value="732"/>
</dbReference>
<dbReference type="IntAct" id="P61226">
    <property type="interactions" value="2"/>
</dbReference>
<dbReference type="STRING" id="10090.ENSMUSP00000038841"/>
<dbReference type="GlyGen" id="P61226">
    <property type="glycosylation" value="1 site, 1 O-linked glycan (1 site)"/>
</dbReference>
<dbReference type="iPTMnet" id="P61226"/>
<dbReference type="PhosphoSitePlus" id="P61226"/>
<dbReference type="SwissPalm" id="P61226"/>
<dbReference type="jPOST" id="P61226"/>
<dbReference type="PaxDb" id="10090-ENSMUSP00000038841"/>
<dbReference type="PeptideAtlas" id="P61226"/>
<dbReference type="ProteomicsDB" id="254983"/>
<dbReference type="Pumba" id="P61226"/>
<dbReference type="Antibodypedia" id="33622">
    <property type="antibodies" value="268 antibodies from 28 providers"/>
</dbReference>
<dbReference type="DNASU" id="74012"/>
<dbReference type="Ensembl" id="ENSMUST00000049064.4">
    <property type="protein sequence ID" value="ENSMUSP00000038841.3"/>
    <property type="gene ID" value="ENSMUSG00000036894.4"/>
</dbReference>
<dbReference type="GeneID" id="74012"/>
<dbReference type="KEGG" id="mmu:74012"/>
<dbReference type="UCSC" id="uc008pjl.1">
    <property type="organism name" value="mouse"/>
</dbReference>
<dbReference type="AGR" id="MGI:1921262"/>
<dbReference type="CTD" id="5912"/>
<dbReference type="MGI" id="MGI:1921262">
    <property type="gene designation" value="Rap2b"/>
</dbReference>
<dbReference type="VEuPathDB" id="HostDB:ENSMUSG00000036894"/>
<dbReference type="eggNOG" id="KOG0395">
    <property type="taxonomic scope" value="Eukaryota"/>
</dbReference>
<dbReference type="GeneTree" id="ENSGT00940000160283"/>
<dbReference type="HOGENOM" id="CLU_041217_9_8_1"/>
<dbReference type="InParanoid" id="P61226"/>
<dbReference type="OMA" id="QMNYSAV"/>
<dbReference type="OrthoDB" id="5976022at2759"/>
<dbReference type="PhylomeDB" id="P61226"/>
<dbReference type="TreeFam" id="TF313014"/>
<dbReference type="Reactome" id="R-MMU-6798695">
    <property type="pathway name" value="Neutrophil degranulation"/>
</dbReference>
<dbReference type="BioGRID-ORCS" id="74012">
    <property type="hits" value="6 hits in 81 CRISPR screens"/>
</dbReference>
<dbReference type="CD-CODE" id="CE726F99">
    <property type="entry name" value="Postsynaptic density"/>
</dbReference>
<dbReference type="ChiTaRS" id="Rap2b">
    <property type="organism name" value="mouse"/>
</dbReference>
<dbReference type="PRO" id="PR:P61226"/>
<dbReference type="Proteomes" id="UP000000589">
    <property type="component" value="Chromosome 3"/>
</dbReference>
<dbReference type="RNAct" id="P61226">
    <property type="molecule type" value="protein"/>
</dbReference>
<dbReference type="Bgee" id="ENSMUSG00000036894">
    <property type="expression patterns" value="Expressed in aortic valve and 240 other cell types or tissues"/>
</dbReference>
<dbReference type="ExpressionAtlas" id="P61226">
    <property type="expression patterns" value="baseline and differential"/>
</dbReference>
<dbReference type="GO" id="GO:0005923">
    <property type="term" value="C:bicellular tight junction"/>
    <property type="evidence" value="ECO:0007669"/>
    <property type="project" value="Ensembl"/>
</dbReference>
<dbReference type="GO" id="GO:0044291">
    <property type="term" value="C:cell-cell contact zone"/>
    <property type="evidence" value="ECO:0007669"/>
    <property type="project" value="Ensembl"/>
</dbReference>
<dbReference type="GO" id="GO:0005829">
    <property type="term" value="C:cytosol"/>
    <property type="evidence" value="ECO:0000314"/>
    <property type="project" value="MGI"/>
</dbReference>
<dbReference type="GO" id="GO:0070062">
    <property type="term" value="C:extracellular exosome"/>
    <property type="evidence" value="ECO:0007669"/>
    <property type="project" value="Ensembl"/>
</dbReference>
<dbReference type="GO" id="GO:0016020">
    <property type="term" value="C:membrane"/>
    <property type="evidence" value="ECO:0000314"/>
    <property type="project" value="MGI"/>
</dbReference>
<dbReference type="GO" id="GO:0045121">
    <property type="term" value="C:membrane raft"/>
    <property type="evidence" value="ECO:0007669"/>
    <property type="project" value="Ensembl"/>
</dbReference>
<dbReference type="GO" id="GO:0005886">
    <property type="term" value="C:plasma membrane"/>
    <property type="evidence" value="ECO:0007669"/>
    <property type="project" value="Ensembl"/>
</dbReference>
<dbReference type="GO" id="GO:0055037">
    <property type="term" value="C:recycling endosome"/>
    <property type="evidence" value="ECO:0000314"/>
    <property type="project" value="MGI"/>
</dbReference>
<dbReference type="GO" id="GO:0055038">
    <property type="term" value="C:recycling endosome membrane"/>
    <property type="evidence" value="ECO:0000314"/>
    <property type="project" value="UniProtKB"/>
</dbReference>
<dbReference type="GO" id="GO:0003925">
    <property type="term" value="F:G protein activity"/>
    <property type="evidence" value="ECO:0007669"/>
    <property type="project" value="UniProtKB-EC"/>
</dbReference>
<dbReference type="GO" id="GO:0019003">
    <property type="term" value="F:GDP binding"/>
    <property type="evidence" value="ECO:0007669"/>
    <property type="project" value="Ensembl"/>
</dbReference>
<dbReference type="GO" id="GO:0005525">
    <property type="term" value="F:GTP binding"/>
    <property type="evidence" value="ECO:0007669"/>
    <property type="project" value="UniProtKB-KW"/>
</dbReference>
<dbReference type="GO" id="GO:0019904">
    <property type="term" value="F:protein domain specific binding"/>
    <property type="evidence" value="ECO:0000353"/>
    <property type="project" value="MGI"/>
</dbReference>
<dbReference type="GO" id="GO:0030336">
    <property type="term" value="P:negative regulation of cell migration"/>
    <property type="evidence" value="ECO:0000314"/>
    <property type="project" value="MGI"/>
</dbReference>
<dbReference type="GO" id="GO:0070527">
    <property type="term" value="P:platelet aggregation"/>
    <property type="evidence" value="ECO:0007669"/>
    <property type="project" value="Ensembl"/>
</dbReference>
<dbReference type="GO" id="GO:0032486">
    <property type="term" value="P:Rap protein signal transduction"/>
    <property type="evidence" value="ECO:0000314"/>
    <property type="project" value="UniProtKB"/>
</dbReference>
<dbReference type="GO" id="GO:0061097">
    <property type="term" value="P:regulation of protein tyrosine kinase activity"/>
    <property type="evidence" value="ECO:0000314"/>
    <property type="project" value="UniProtKB"/>
</dbReference>
<dbReference type="CDD" id="cd04176">
    <property type="entry name" value="Rap2"/>
    <property type="match status" value="1"/>
</dbReference>
<dbReference type="FunFam" id="3.40.50.300:FF:001686">
    <property type="entry name" value="KRAS proto-oncogene, GTPase"/>
    <property type="match status" value="1"/>
</dbReference>
<dbReference type="FunFam" id="3.40.50.300:FF:002735">
    <property type="entry name" value="ras-related protein Rap-2b isoform X3"/>
    <property type="match status" value="1"/>
</dbReference>
<dbReference type="Gene3D" id="3.40.50.300">
    <property type="entry name" value="P-loop containing nucleotide triphosphate hydrolases"/>
    <property type="match status" value="1"/>
</dbReference>
<dbReference type="InterPro" id="IPR027417">
    <property type="entry name" value="P-loop_NTPase"/>
</dbReference>
<dbReference type="InterPro" id="IPR041840">
    <property type="entry name" value="Rap2"/>
</dbReference>
<dbReference type="InterPro" id="IPR005225">
    <property type="entry name" value="Small_GTP-bd"/>
</dbReference>
<dbReference type="InterPro" id="IPR001806">
    <property type="entry name" value="Small_GTPase"/>
</dbReference>
<dbReference type="InterPro" id="IPR020849">
    <property type="entry name" value="Small_GTPase_Ras-type"/>
</dbReference>
<dbReference type="NCBIfam" id="TIGR00231">
    <property type="entry name" value="small_GTP"/>
    <property type="match status" value="1"/>
</dbReference>
<dbReference type="PANTHER" id="PTHR24070">
    <property type="entry name" value="RAS, DI-RAS, AND RHEB FAMILY MEMBERS OF SMALL GTPASE SUPERFAMILY"/>
    <property type="match status" value="1"/>
</dbReference>
<dbReference type="Pfam" id="PF00071">
    <property type="entry name" value="Ras"/>
    <property type="match status" value="1"/>
</dbReference>
<dbReference type="PRINTS" id="PR00449">
    <property type="entry name" value="RASTRNSFRMNG"/>
</dbReference>
<dbReference type="SMART" id="SM00175">
    <property type="entry name" value="RAB"/>
    <property type="match status" value="1"/>
</dbReference>
<dbReference type="SMART" id="SM00173">
    <property type="entry name" value="RAS"/>
    <property type="match status" value="1"/>
</dbReference>
<dbReference type="SMART" id="SM00174">
    <property type="entry name" value="RHO"/>
    <property type="match status" value="1"/>
</dbReference>
<dbReference type="SUPFAM" id="SSF52540">
    <property type="entry name" value="P-loop containing nucleoside triphosphate hydrolases"/>
    <property type="match status" value="1"/>
</dbReference>
<dbReference type="PROSITE" id="PS51421">
    <property type="entry name" value="RAS"/>
    <property type="match status" value="1"/>
</dbReference>
<accession>P61226</accession>
<accession>P17964</accession>
<accession>Q96EG5</accession>
<accession>Q9CXG0</accession>
<evidence type="ECO:0000250" key="1"/>
<evidence type="ECO:0000250" key="2">
    <source>
        <dbReference type="UniProtKB" id="P10114"/>
    </source>
</evidence>
<evidence type="ECO:0000269" key="3">
    <source>
    </source>
</evidence>
<evidence type="ECO:0000269" key="4">
    <source>
    </source>
</evidence>
<evidence type="ECO:0000305" key="5"/>
<evidence type="ECO:0000305" key="6">
    <source>
    </source>
</evidence>
<proteinExistence type="evidence at protein level"/>
<gene>
    <name type="primary">Rap2b</name>
</gene>
<name>RAP2B_MOUSE</name>
<sequence length="183" mass="20504">MREYKVVVLGSGGVGKSALTVQFVTGSFIEKYDPTIEDFYRKEIEVDSSPSVLEILDTAGTEQFASMRDLYIKNGQGFILVYSLVNQQSFQDIKPMRDQIIRVKRYERVPMILVGNKVDLEGEREVSYGEGKALAEEWSCPFMETSAKNKASVDELFAEIVRQMNYAAQPNGDEGCCSACVIL</sequence>
<feature type="chain" id="PRO_0000030217" description="Ras-related protein Rap-2b">
    <location>
        <begin position="1"/>
        <end position="180"/>
    </location>
</feature>
<feature type="propeptide" id="PRO_0000030218" description="Removed in mature form" evidence="6">
    <location>
        <begin position="181"/>
        <end position="183"/>
    </location>
</feature>
<feature type="short sequence motif" description="Effector region" evidence="5">
    <location>
        <begin position="32"/>
        <end position="40"/>
    </location>
</feature>
<feature type="binding site" evidence="1">
    <location>
        <begin position="10"/>
        <end position="17"/>
    </location>
    <ligand>
        <name>GTP</name>
        <dbReference type="ChEBI" id="CHEBI:37565"/>
    </ligand>
</feature>
<feature type="binding site" evidence="1">
    <location>
        <begin position="57"/>
        <end position="61"/>
    </location>
    <ligand>
        <name>GTP</name>
        <dbReference type="ChEBI" id="CHEBI:37565"/>
    </ligand>
</feature>
<feature type="binding site" evidence="1">
    <location>
        <begin position="116"/>
        <end position="119"/>
    </location>
    <ligand>
        <name>GTP</name>
        <dbReference type="ChEBI" id="CHEBI:37565"/>
    </ligand>
</feature>
<feature type="modified residue" description="Cysteine methyl ester" evidence="6">
    <location>
        <position position="180"/>
    </location>
</feature>
<feature type="lipid moiety-binding region" description="S-palmitoyl cysteine" evidence="3">
    <location>
        <position position="176"/>
    </location>
</feature>
<feature type="lipid moiety-binding region" description="S-palmitoyl cysteine" evidence="3">
    <location>
        <position position="177"/>
    </location>
</feature>
<feature type="lipid moiety-binding region" description="S-geranylgeranyl cysteine" evidence="3">
    <location>
        <position position="180"/>
    </location>
</feature>
<feature type="mutagenesis site" description="No reduction of association with the recycling endosome membranes and does activate TNIK; when associated with G-177." evidence="3">
    <original>C</original>
    <variation>G</variation>
    <location>
        <position position="176"/>
    </location>
</feature>
<feature type="mutagenesis site" description="No reduction of association with the recycling endosome membranes and does activate TNIK; when associated with G-176." evidence="3">
    <original>C</original>
    <variation>G</variation>
    <location>
        <position position="177"/>
    </location>
</feature>
<feature type="mutagenesis site" description="Loss of association with membranes." evidence="3">
    <original>C</original>
    <variation>A</variation>
    <location>
        <position position="180"/>
    </location>
</feature>